<organism>
    <name type="scientific">Pyrococcus furiosus (strain ATCC 43587 / DSM 3638 / JCM 8422 / Vc1)</name>
    <dbReference type="NCBI Taxonomy" id="186497"/>
    <lineage>
        <taxon>Archaea</taxon>
        <taxon>Methanobacteriati</taxon>
        <taxon>Methanobacteriota</taxon>
        <taxon>Thermococci</taxon>
        <taxon>Thermococcales</taxon>
        <taxon>Thermococcaceae</taxon>
        <taxon>Pyrococcus</taxon>
    </lineage>
</organism>
<keyword id="KW-0002">3D-structure</keyword>
<keyword id="KW-1185">Reference proteome</keyword>
<keyword id="KW-0687">Ribonucleoprotein</keyword>
<keyword id="KW-0689">Ribosomal protein</keyword>
<keyword id="KW-0694">RNA-binding</keyword>
<keyword id="KW-0699">rRNA-binding</keyword>
<reference key="1">
    <citation type="journal article" date="1999" name="Genetics">
        <title>Divergence of the hyperthermophilic archaea Pyrococcus furiosus and P. horikoshii inferred from complete genomic sequences.</title>
        <authorList>
            <person name="Maeder D.L."/>
            <person name="Weiss R.B."/>
            <person name="Dunn D.M."/>
            <person name="Cherry J.L."/>
            <person name="Gonzalez J.M."/>
            <person name="DiRuggiero J."/>
            <person name="Robb F.T."/>
        </authorList>
    </citation>
    <scope>NUCLEOTIDE SEQUENCE [LARGE SCALE GENOMIC DNA]</scope>
    <source>
        <strain>ATCC 43587 / DSM 3638 / JCM 8422 / Vc1</strain>
    </source>
</reference>
<reference evidence="3" key="2">
    <citation type="journal article" date="2013" name="Nucleic Acids Res.">
        <title>Promiscuous behaviour of archaeal ribosomal proteins: implications for eukaryotic ribosome evolution.</title>
        <authorList>
            <person name="Armache J.P."/>
            <person name="Anger A.M."/>
            <person name="Marquez V."/>
            <person name="Franckenberg S."/>
            <person name="Frohlich T."/>
            <person name="Villa E."/>
            <person name="Berninghausen O."/>
            <person name="Thomm M."/>
            <person name="Arnold G.J."/>
            <person name="Beckmann R."/>
            <person name="Wilson D.N."/>
        </authorList>
    </citation>
    <scope>STRUCTURE BY ELECTRON MICROSCOPY (6.60 ANGSTROMS) IN THE 70S RIBOSOME</scope>
    <scope>SUBUNIT</scope>
</reference>
<name>RS4E_PYRFU</name>
<proteinExistence type="evidence at protein level"/>
<feature type="chain" id="PRO_0000130859" description="Small ribosomal subunit protein eS4">
    <location>
        <begin position="1"/>
        <end position="243"/>
    </location>
</feature>
<feature type="domain" description="S4 RNA-binding" evidence="1">
    <location>
        <begin position="43"/>
        <end position="105"/>
    </location>
</feature>
<dbReference type="EMBL" id="AE009950">
    <property type="protein sequence ID" value="AAL81936.1"/>
    <property type="molecule type" value="Genomic_DNA"/>
</dbReference>
<dbReference type="RefSeq" id="WP_011012953.1">
    <property type="nucleotide sequence ID" value="NZ_CP023154.1"/>
</dbReference>
<dbReference type="PDB" id="4V6U">
    <property type="method" value="EM"/>
    <property type="resolution" value="6.60 A"/>
    <property type="chains" value="AE=1-243"/>
</dbReference>
<dbReference type="PDB" id="5JB3">
    <property type="method" value="EM"/>
    <property type="resolution" value="5.34 A"/>
    <property type="chains" value="E=1-243"/>
</dbReference>
<dbReference type="PDB" id="5JBH">
    <property type="method" value="EM"/>
    <property type="resolution" value="5.34 A"/>
    <property type="chains" value="E=1-243"/>
</dbReference>
<dbReference type="PDBsum" id="4V6U"/>
<dbReference type="PDBsum" id="5JB3"/>
<dbReference type="PDBsum" id="5JBH"/>
<dbReference type="EMDB" id="EMD-50611"/>
<dbReference type="EMDB" id="EMD-50612"/>
<dbReference type="EMDB" id="EMD-50613"/>
<dbReference type="EMDB" id="EMD-8149"/>
<dbReference type="SMR" id="Q8U011"/>
<dbReference type="STRING" id="186497.PF1812"/>
<dbReference type="PaxDb" id="186497-PF1812"/>
<dbReference type="KEGG" id="pfu:PF1812"/>
<dbReference type="PATRIC" id="fig|186497.12.peg.1883"/>
<dbReference type="eggNOG" id="arCOG04093">
    <property type="taxonomic scope" value="Archaea"/>
</dbReference>
<dbReference type="HOGENOM" id="CLU_060400_0_0_2"/>
<dbReference type="OrthoDB" id="372073at2157"/>
<dbReference type="PhylomeDB" id="Q8U011"/>
<dbReference type="Proteomes" id="UP000001013">
    <property type="component" value="Chromosome"/>
</dbReference>
<dbReference type="GO" id="GO:0022627">
    <property type="term" value="C:cytosolic small ribosomal subunit"/>
    <property type="evidence" value="ECO:0007669"/>
    <property type="project" value="TreeGrafter"/>
</dbReference>
<dbReference type="GO" id="GO:0019843">
    <property type="term" value="F:rRNA binding"/>
    <property type="evidence" value="ECO:0007669"/>
    <property type="project" value="UniProtKB-KW"/>
</dbReference>
<dbReference type="GO" id="GO:0003735">
    <property type="term" value="F:structural constituent of ribosome"/>
    <property type="evidence" value="ECO:0007669"/>
    <property type="project" value="InterPro"/>
</dbReference>
<dbReference type="GO" id="GO:0006412">
    <property type="term" value="P:translation"/>
    <property type="evidence" value="ECO:0007669"/>
    <property type="project" value="UniProtKB-UniRule"/>
</dbReference>
<dbReference type="CDD" id="cd06087">
    <property type="entry name" value="KOW_RPS4"/>
    <property type="match status" value="1"/>
</dbReference>
<dbReference type="CDD" id="cd00165">
    <property type="entry name" value="S4"/>
    <property type="match status" value="1"/>
</dbReference>
<dbReference type="FunFam" id="2.30.30.30:FF:000090">
    <property type="entry name" value="30S ribosomal protein S4e"/>
    <property type="match status" value="1"/>
</dbReference>
<dbReference type="FunFam" id="3.10.290.10:FF:000002">
    <property type="entry name" value="40S ribosomal protein S4"/>
    <property type="match status" value="1"/>
</dbReference>
<dbReference type="Gene3D" id="2.30.30.30">
    <property type="match status" value="1"/>
</dbReference>
<dbReference type="Gene3D" id="2.40.50.740">
    <property type="match status" value="1"/>
</dbReference>
<dbReference type="Gene3D" id="3.10.290.10">
    <property type="entry name" value="RNA-binding S4 domain"/>
    <property type="match status" value="1"/>
</dbReference>
<dbReference type="HAMAP" id="MF_00485">
    <property type="entry name" value="Ribosomal_eS4"/>
    <property type="match status" value="1"/>
</dbReference>
<dbReference type="InterPro" id="IPR005824">
    <property type="entry name" value="KOW"/>
</dbReference>
<dbReference type="InterPro" id="IPR014722">
    <property type="entry name" value="Rib_uL2_dom2"/>
</dbReference>
<dbReference type="InterPro" id="IPR000876">
    <property type="entry name" value="Ribosomal_eS4"/>
</dbReference>
<dbReference type="InterPro" id="IPR013845">
    <property type="entry name" value="Ribosomal_eS4_central_region"/>
</dbReference>
<dbReference type="InterPro" id="IPR038237">
    <property type="entry name" value="Ribosomal_eS4_central_sf"/>
</dbReference>
<dbReference type="InterPro" id="IPR041982">
    <property type="entry name" value="Ribosomal_eS4_KOW"/>
</dbReference>
<dbReference type="InterPro" id="IPR013843">
    <property type="entry name" value="Ribosomal_eS4_N"/>
</dbReference>
<dbReference type="InterPro" id="IPR018199">
    <property type="entry name" value="Ribosomal_eS4_N_CS"/>
</dbReference>
<dbReference type="InterPro" id="IPR002942">
    <property type="entry name" value="S4_RNA-bd"/>
</dbReference>
<dbReference type="InterPro" id="IPR036986">
    <property type="entry name" value="S4_RNA-bd_sf"/>
</dbReference>
<dbReference type="NCBIfam" id="NF003312">
    <property type="entry name" value="PRK04313.1"/>
    <property type="match status" value="1"/>
</dbReference>
<dbReference type="PANTHER" id="PTHR11581">
    <property type="entry name" value="30S/40S RIBOSOMAL PROTEIN S4"/>
    <property type="match status" value="1"/>
</dbReference>
<dbReference type="PANTHER" id="PTHR11581:SF0">
    <property type="entry name" value="SMALL RIBOSOMAL SUBUNIT PROTEIN ES4"/>
    <property type="match status" value="1"/>
</dbReference>
<dbReference type="Pfam" id="PF00900">
    <property type="entry name" value="Ribosomal_S4e"/>
    <property type="match status" value="1"/>
</dbReference>
<dbReference type="Pfam" id="PF08071">
    <property type="entry name" value="RS4NT"/>
    <property type="match status" value="1"/>
</dbReference>
<dbReference type="Pfam" id="PF01479">
    <property type="entry name" value="S4"/>
    <property type="match status" value="1"/>
</dbReference>
<dbReference type="PIRSF" id="PIRSF002116">
    <property type="entry name" value="Ribosomal_S4"/>
    <property type="match status" value="1"/>
</dbReference>
<dbReference type="SMART" id="SM00739">
    <property type="entry name" value="KOW"/>
    <property type="match status" value="1"/>
</dbReference>
<dbReference type="SMART" id="SM00363">
    <property type="entry name" value="S4"/>
    <property type="match status" value="1"/>
</dbReference>
<dbReference type="SUPFAM" id="SSF55174">
    <property type="entry name" value="Alpha-L RNA-binding motif"/>
    <property type="match status" value="1"/>
</dbReference>
<dbReference type="PROSITE" id="PS00528">
    <property type="entry name" value="RIBOSOMAL_S4E"/>
    <property type="match status" value="1"/>
</dbReference>
<dbReference type="PROSITE" id="PS50889">
    <property type="entry name" value="S4"/>
    <property type="match status" value="1"/>
</dbReference>
<sequence length="243" mass="28146">MARKGPKRHLKRLAAPTSWYIERKAYKWAVRPRPGPHNMRTSIPLLYIVRDYLGYAKTAREARKILNEGKFLVDGRVRKDYKFPVGIMDVVSIPETGEHYRVLPNRIGKLILHPISEDEAFIKPLRIRNKRMIKGARVQLNFHDGTNHIVSIAEKDNYFTSYTVLMKVPEREILEVLPFEKGAYVFVTQGKNVARKGRIVEIKRFPMGWPDVVTIEDEEGELFDTLKEYAFVVGTDKPKISLP</sequence>
<accession>Q8U011</accession>
<evidence type="ECO:0000255" key="1">
    <source>
        <dbReference type="HAMAP-Rule" id="MF_00485"/>
    </source>
</evidence>
<evidence type="ECO:0000269" key="2">
    <source>
    </source>
</evidence>
<evidence type="ECO:0007744" key="3">
    <source>
        <dbReference type="PDB" id="4V6U"/>
    </source>
</evidence>
<comment type="subunit">
    <text evidence="2">Part of the 30S ribosomal subunit.</text>
</comment>
<comment type="similarity">
    <text evidence="1">Belongs to the eukaryotic ribosomal protein eS4 family.</text>
</comment>
<protein>
    <recommendedName>
        <fullName evidence="1">Small ribosomal subunit protein eS4</fullName>
    </recommendedName>
    <alternativeName>
        <fullName>30S ribosomal protein S4e</fullName>
    </alternativeName>
</protein>
<gene>
    <name evidence="1" type="primary">rps4e</name>
    <name type="ordered locus">PF1812</name>
</gene>